<accession>Q8YFJ0</accession>
<keyword id="KW-0030">Aminoacyl-tRNA synthetase</keyword>
<keyword id="KW-0067">ATP-binding</keyword>
<keyword id="KW-0963">Cytoplasm</keyword>
<keyword id="KW-0436">Ligase</keyword>
<keyword id="KW-0547">Nucleotide-binding</keyword>
<keyword id="KW-0648">Protein biosynthesis</keyword>
<name>SYGA_BRUME</name>
<organism>
    <name type="scientific">Brucella melitensis biotype 1 (strain ATCC 23456 / CCUG 17765 / NCTC 10094 / 16M)</name>
    <dbReference type="NCBI Taxonomy" id="224914"/>
    <lineage>
        <taxon>Bacteria</taxon>
        <taxon>Pseudomonadati</taxon>
        <taxon>Pseudomonadota</taxon>
        <taxon>Alphaproteobacteria</taxon>
        <taxon>Hyphomicrobiales</taxon>
        <taxon>Brucellaceae</taxon>
        <taxon>Brucella/Ochrobactrum group</taxon>
        <taxon>Brucella</taxon>
    </lineage>
</organism>
<reference key="1">
    <citation type="journal article" date="2002" name="Proc. Natl. Acad. Sci. U.S.A.">
        <title>The genome sequence of the facultative intracellular pathogen Brucella melitensis.</title>
        <authorList>
            <person name="DelVecchio V.G."/>
            <person name="Kapatral V."/>
            <person name="Redkar R.J."/>
            <person name="Patra G."/>
            <person name="Mujer C."/>
            <person name="Los T."/>
            <person name="Ivanova N."/>
            <person name="Anderson I."/>
            <person name="Bhattacharyya A."/>
            <person name="Lykidis A."/>
            <person name="Reznik G."/>
            <person name="Jablonski L."/>
            <person name="Larsen N."/>
            <person name="D'Souza M."/>
            <person name="Bernal A."/>
            <person name="Mazur M."/>
            <person name="Goltsman E."/>
            <person name="Selkov E."/>
            <person name="Elzer P.H."/>
            <person name="Hagius S."/>
            <person name="O'Callaghan D."/>
            <person name="Letesson J.-J."/>
            <person name="Haselkorn R."/>
            <person name="Kyrpides N.C."/>
            <person name="Overbeek R."/>
        </authorList>
    </citation>
    <scope>NUCLEOTIDE SEQUENCE [LARGE SCALE GENOMIC DNA]</scope>
    <source>
        <strain>ATCC 23456 / CCUG 17765 / NCTC 10094 / 16M</strain>
    </source>
</reference>
<dbReference type="EC" id="6.1.1.14" evidence="1"/>
<dbReference type="EMBL" id="AE008917">
    <property type="protein sequence ID" value="AAL52711.1"/>
    <property type="status" value="ALT_INIT"/>
    <property type="molecule type" value="Genomic_DNA"/>
</dbReference>
<dbReference type="PIR" id="AD3443">
    <property type="entry name" value="AD3443"/>
</dbReference>
<dbReference type="RefSeq" id="WP_002963561.1">
    <property type="nucleotide sequence ID" value="NZ_GG703778.1"/>
</dbReference>
<dbReference type="SMR" id="Q8YFJ0"/>
<dbReference type="KEGG" id="bme:BMEI1530"/>
<dbReference type="KEGG" id="bmel:DK63_1962"/>
<dbReference type="PATRIC" id="fig|224914.52.peg.2063"/>
<dbReference type="eggNOG" id="COG0752">
    <property type="taxonomic scope" value="Bacteria"/>
</dbReference>
<dbReference type="PhylomeDB" id="Q8YFJ0"/>
<dbReference type="Proteomes" id="UP000000419">
    <property type="component" value="Chromosome I"/>
</dbReference>
<dbReference type="GO" id="GO:0005829">
    <property type="term" value="C:cytosol"/>
    <property type="evidence" value="ECO:0007669"/>
    <property type="project" value="TreeGrafter"/>
</dbReference>
<dbReference type="GO" id="GO:0005524">
    <property type="term" value="F:ATP binding"/>
    <property type="evidence" value="ECO:0007669"/>
    <property type="project" value="UniProtKB-UniRule"/>
</dbReference>
<dbReference type="GO" id="GO:0004820">
    <property type="term" value="F:glycine-tRNA ligase activity"/>
    <property type="evidence" value="ECO:0007669"/>
    <property type="project" value="UniProtKB-UniRule"/>
</dbReference>
<dbReference type="GO" id="GO:0006426">
    <property type="term" value="P:glycyl-tRNA aminoacylation"/>
    <property type="evidence" value="ECO:0007669"/>
    <property type="project" value="UniProtKB-UniRule"/>
</dbReference>
<dbReference type="CDD" id="cd00733">
    <property type="entry name" value="GlyRS_alpha_core"/>
    <property type="match status" value="1"/>
</dbReference>
<dbReference type="FunFam" id="3.30.930.10:FF:000006">
    <property type="entry name" value="Glycine--tRNA ligase alpha subunit"/>
    <property type="match status" value="1"/>
</dbReference>
<dbReference type="Gene3D" id="3.30.930.10">
    <property type="entry name" value="Bira Bifunctional Protein, Domain 2"/>
    <property type="match status" value="1"/>
</dbReference>
<dbReference type="Gene3D" id="1.20.58.180">
    <property type="entry name" value="Class II aaRS and biotin synthetases, domain 2"/>
    <property type="match status" value="1"/>
</dbReference>
<dbReference type="HAMAP" id="MF_00254">
    <property type="entry name" value="Gly_tRNA_synth_alpha"/>
    <property type="match status" value="1"/>
</dbReference>
<dbReference type="InterPro" id="IPR045864">
    <property type="entry name" value="aa-tRNA-synth_II/BPL/LPL"/>
</dbReference>
<dbReference type="InterPro" id="IPR006194">
    <property type="entry name" value="Gly-tRNA-synth_heterodimer"/>
</dbReference>
<dbReference type="InterPro" id="IPR002310">
    <property type="entry name" value="Gly-tRNA_ligase_asu"/>
</dbReference>
<dbReference type="NCBIfam" id="TIGR00388">
    <property type="entry name" value="glyQ"/>
    <property type="match status" value="1"/>
</dbReference>
<dbReference type="NCBIfam" id="NF006827">
    <property type="entry name" value="PRK09348.1"/>
    <property type="match status" value="1"/>
</dbReference>
<dbReference type="PANTHER" id="PTHR30075:SF2">
    <property type="entry name" value="GLYCINE--TRNA LIGASE, CHLOROPLASTIC_MITOCHONDRIAL 2"/>
    <property type="match status" value="1"/>
</dbReference>
<dbReference type="PANTHER" id="PTHR30075">
    <property type="entry name" value="GLYCYL-TRNA SYNTHETASE"/>
    <property type="match status" value="1"/>
</dbReference>
<dbReference type="Pfam" id="PF02091">
    <property type="entry name" value="tRNA-synt_2e"/>
    <property type="match status" value="1"/>
</dbReference>
<dbReference type="PRINTS" id="PR01044">
    <property type="entry name" value="TRNASYNTHGA"/>
</dbReference>
<dbReference type="SUPFAM" id="SSF55681">
    <property type="entry name" value="Class II aaRS and biotin synthetases"/>
    <property type="match status" value="1"/>
</dbReference>
<dbReference type="PROSITE" id="PS50861">
    <property type="entry name" value="AA_TRNA_LIGASE_II_GLYAB"/>
    <property type="match status" value="1"/>
</dbReference>
<sequence length="308" mass="34945">MHPTRSFQGLILTLHNYWAEHGCAILQPYDMEVGAGTFHPATTLRSLGPKPWKAAYVQPSRRPKDGRYGENPNRLQHYYQYQVLIKPSPPNLQDLYLGSLKAIGLDPTLHDVRFVEDDWESPTLGAWGLGWECWCDGMEVSQFTYFQQVCGIECSPVAGELTYGLERLAMYVQGVDNVYDLNFNGLEGDEKVTYGDVFLQAEQEYSRYNFEMANTETLHQHFIDAERECEAILKAGSTGENSLHKCVFPAYDQCIKASHVFNLMDARGVISVTERQGYILRVRNLARQCGEAFLLTDAGGFNFKREGE</sequence>
<evidence type="ECO:0000255" key="1">
    <source>
        <dbReference type="HAMAP-Rule" id="MF_00254"/>
    </source>
</evidence>
<evidence type="ECO:0000305" key="2"/>
<gene>
    <name evidence="1" type="primary">glyQ</name>
    <name type="ordered locus">BMEI1530</name>
</gene>
<proteinExistence type="inferred from homology"/>
<protein>
    <recommendedName>
        <fullName evidence="1">Glycine--tRNA ligase alpha subunit</fullName>
        <ecNumber evidence="1">6.1.1.14</ecNumber>
    </recommendedName>
    <alternativeName>
        <fullName evidence="1">Glycyl-tRNA synthetase alpha subunit</fullName>
        <shortName evidence="1">GlyRS</shortName>
    </alternativeName>
</protein>
<feature type="chain" id="PRO_0000072828" description="Glycine--tRNA ligase alpha subunit">
    <location>
        <begin position="1"/>
        <end position="308"/>
    </location>
</feature>
<comment type="catalytic activity">
    <reaction evidence="1">
        <text>tRNA(Gly) + glycine + ATP = glycyl-tRNA(Gly) + AMP + diphosphate</text>
        <dbReference type="Rhea" id="RHEA:16013"/>
        <dbReference type="Rhea" id="RHEA-COMP:9664"/>
        <dbReference type="Rhea" id="RHEA-COMP:9683"/>
        <dbReference type="ChEBI" id="CHEBI:30616"/>
        <dbReference type="ChEBI" id="CHEBI:33019"/>
        <dbReference type="ChEBI" id="CHEBI:57305"/>
        <dbReference type="ChEBI" id="CHEBI:78442"/>
        <dbReference type="ChEBI" id="CHEBI:78522"/>
        <dbReference type="ChEBI" id="CHEBI:456215"/>
        <dbReference type="EC" id="6.1.1.14"/>
    </reaction>
</comment>
<comment type="subunit">
    <text evidence="1">Tetramer of two alpha and two beta subunits.</text>
</comment>
<comment type="subcellular location">
    <subcellularLocation>
        <location evidence="1">Cytoplasm</location>
    </subcellularLocation>
</comment>
<comment type="similarity">
    <text evidence="1">Belongs to the class-II aminoacyl-tRNA synthetase family.</text>
</comment>
<comment type="sequence caution" evidence="2">
    <conflict type="erroneous initiation">
        <sequence resource="EMBL-CDS" id="AAL52711"/>
    </conflict>
</comment>